<name>BETA_PSEPK</name>
<keyword id="KW-0274">FAD</keyword>
<keyword id="KW-0285">Flavoprotein</keyword>
<keyword id="KW-0520">NAD</keyword>
<keyword id="KW-0560">Oxidoreductase</keyword>
<keyword id="KW-1185">Reference proteome</keyword>
<evidence type="ECO:0000255" key="1">
    <source>
        <dbReference type="HAMAP-Rule" id="MF_00750"/>
    </source>
</evidence>
<evidence type="ECO:0000256" key="2">
    <source>
        <dbReference type="SAM" id="MobiDB-lite"/>
    </source>
</evidence>
<gene>
    <name evidence="1" type="primary">betA</name>
    <name type="ordered locus">PP_5064</name>
</gene>
<accession>Q88CW6</accession>
<feature type="chain" id="PRO_0000205591" description="Oxygen-dependent choline dehydrogenase">
    <location>
        <begin position="1"/>
        <end position="565"/>
    </location>
</feature>
<feature type="region of interest" description="Disordered" evidence="2">
    <location>
        <begin position="182"/>
        <end position="201"/>
    </location>
</feature>
<feature type="active site" description="Proton acceptor" evidence="1">
    <location>
        <position position="475"/>
    </location>
</feature>
<feature type="binding site" evidence="1">
    <location>
        <begin position="6"/>
        <end position="35"/>
    </location>
    <ligand>
        <name>FAD</name>
        <dbReference type="ChEBI" id="CHEBI:57692"/>
    </ligand>
</feature>
<dbReference type="EC" id="1.1.99.1" evidence="1"/>
<dbReference type="EC" id="1.2.1.8" evidence="1"/>
<dbReference type="EMBL" id="AE015451">
    <property type="protein sequence ID" value="AAN70629.1"/>
    <property type="molecule type" value="Genomic_DNA"/>
</dbReference>
<dbReference type="RefSeq" id="NP_747165.1">
    <property type="nucleotide sequence ID" value="NC_002947.4"/>
</dbReference>
<dbReference type="RefSeq" id="WP_010955611.1">
    <property type="nucleotide sequence ID" value="NZ_CP169744.1"/>
</dbReference>
<dbReference type="SMR" id="Q88CW6"/>
<dbReference type="STRING" id="160488.PP_5064"/>
<dbReference type="CAZy" id="AA3">
    <property type="family name" value="Auxiliary Activities 3"/>
</dbReference>
<dbReference type="PaxDb" id="160488-PP_5064"/>
<dbReference type="GeneID" id="83682798"/>
<dbReference type="KEGG" id="ppu:PP_5064"/>
<dbReference type="PATRIC" id="fig|160488.4.peg.5406"/>
<dbReference type="eggNOG" id="COG2303">
    <property type="taxonomic scope" value="Bacteria"/>
</dbReference>
<dbReference type="HOGENOM" id="CLU_002865_7_1_6"/>
<dbReference type="OrthoDB" id="9785276at2"/>
<dbReference type="PhylomeDB" id="Q88CW6"/>
<dbReference type="BioCyc" id="PPUT160488:G1G01-5408-MONOMER"/>
<dbReference type="UniPathway" id="UPA00529">
    <property type="reaction ID" value="UER00385"/>
</dbReference>
<dbReference type="Proteomes" id="UP000000556">
    <property type="component" value="Chromosome"/>
</dbReference>
<dbReference type="GO" id="GO:0016020">
    <property type="term" value="C:membrane"/>
    <property type="evidence" value="ECO:0007669"/>
    <property type="project" value="TreeGrafter"/>
</dbReference>
<dbReference type="GO" id="GO:0008802">
    <property type="term" value="F:betaine-aldehyde dehydrogenase (NAD+) activity"/>
    <property type="evidence" value="ECO:0007669"/>
    <property type="project" value="UniProtKB-EC"/>
</dbReference>
<dbReference type="GO" id="GO:0008812">
    <property type="term" value="F:choline dehydrogenase activity"/>
    <property type="evidence" value="ECO:0007669"/>
    <property type="project" value="UniProtKB-UniRule"/>
</dbReference>
<dbReference type="GO" id="GO:0050660">
    <property type="term" value="F:flavin adenine dinucleotide binding"/>
    <property type="evidence" value="ECO:0007669"/>
    <property type="project" value="InterPro"/>
</dbReference>
<dbReference type="GO" id="GO:0019285">
    <property type="term" value="P:glycine betaine biosynthetic process from choline"/>
    <property type="evidence" value="ECO:0007669"/>
    <property type="project" value="UniProtKB-UniRule"/>
</dbReference>
<dbReference type="Gene3D" id="3.50.50.60">
    <property type="entry name" value="FAD/NAD(P)-binding domain"/>
    <property type="match status" value="1"/>
</dbReference>
<dbReference type="Gene3D" id="3.30.560.10">
    <property type="entry name" value="Glucose Oxidase, domain 3"/>
    <property type="match status" value="1"/>
</dbReference>
<dbReference type="HAMAP" id="MF_00750">
    <property type="entry name" value="Choline_dehydrogen"/>
    <property type="match status" value="1"/>
</dbReference>
<dbReference type="InterPro" id="IPR011533">
    <property type="entry name" value="BetA"/>
</dbReference>
<dbReference type="InterPro" id="IPR036188">
    <property type="entry name" value="FAD/NAD-bd_sf"/>
</dbReference>
<dbReference type="InterPro" id="IPR012132">
    <property type="entry name" value="GMC_OxRdtase"/>
</dbReference>
<dbReference type="InterPro" id="IPR000172">
    <property type="entry name" value="GMC_OxRdtase_N"/>
</dbReference>
<dbReference type="InterPro" id="IPR007867">
    <property type="entry name" value="GMC_OxRtase_C"/>
</dbReference>
<dbReference type="NCBIfam" id="TIGR01810">
    <property type="entry name" value="betA"/>
    <property type="match status" value="1"/>
</dbReference>
<dbReference type="NCBIfam" id="NF002550">
    <property type="entry name" value="PRK02106.1"/>
    <property type="match status" value="1"/>
</dbReference>
<dbReference type="PANTHER" id="PTHR11552:SF147">
    <property type="entry name" value="CHOLINE DEHYDROGENASE, MITOCHONDRIAL"/>
    <property type="match status" value="1"/>
</dbReference>
<dbReference type="PANTHER" id="PTHR11552">
    <property type="entry name" value="GLUCOSE-METHANOL-CHOLINE GMC OXIDOREDUCTASE"/>
    <property type="match status" value="1"/>
</dbReference>
<dbReference type="Pfam" id="PF05199">
    <property type="entry name" value="GMC_oxred_C"/>
    <property type="match status" value="1"/>
</dbReference>
<dbReference type="Pfam" id="PF00732">
    <property type="entry name" value="GMC_oxred_N"/>
    <property type="match status" value="1"/>
</dbReference>
<dbReference type="PIRSF" id="PIRSF000137">
    <property type="entry name" value="Alcohol_oxidase"/>
    <property type="match status" value="1"/>
</dbReference>
<dbReference type="SUPFAM" id="SSF54373">
    <property type="entry name" value="FAD-linked reductases, C-terminal domain"/>
    <property type="match status" value="1"/>
</dbReference>
<dbReference type="SUPFAM" id="SSF51905">
    <property type="entry name" value="FAD/NAD(P)-binding domain"/>
    <property type="match status" value="1"/>
</dbReference>
<dbReference type="PROSITE" id="PS00623">
    <property type="entry name" value="GMC_OXRED_1"/>
    <property type="match status" value="1"/>
</dbReference>
<dbReference type="PROSITE" id="PS00624">
    <property type="entry name" value="GMC_OXRED_2"/>
    <property type="match status" value="1"/>
</dbReference>
<proteinExistence type="inferred from homology"/>
<comment type="function">
    <text evidence="1">Involved in the biosynthesis of the osmoprotectant glycine betaine. Catalyzes the oxidation of choline to betaine aldehyde and betaine aldehyde to glycine betaine at the same rate.</text>
</comment>
<comment type="catalytic activity">
    <reaction evidence="1">
        <text>choline + A = betaine aldehyde + AH2</text>
        <dbReference type="Rhea" id="RHEA:17433"/>
        <dbReference type="ChEBI" id="CHEBI:13193"/>
        <dbReference type="ChEBI" id="CHEBI:15354"/>
        <dbReference type="ChEBI" id="CHEBI:15710"/>
        <dbReference type="ChEBI" id="CHEBI:17499"/>
        <dbReference type="EC" id="1.1.99.1"/>
    </reaction>
</comment>
<comment type="catalytic activity">
    <reaction evidence="1">
        <text>betaine aldehyde + NAD(+) + H2O = glycine betaine + NADH + 2 H(+)</text>
        <dbReference type="Rhea" id="RHEA:15305"/>
        <dbReference type="ChEBI" id="CHEBI:15377"/>
        <dbReference type="ChEBI" id="CHEBI:15378"/>
        <dbReference type="ChEBI" id="CHEBI:15710"/>
        <dbReference type="ChEBI" id="CHEBI:17750"/>
        <dbReference type="ChEBI" id="CHEBI:57540"/>
        <dbReference type="ChEBI" id="CHEBI:57945"/>
        <dbReference type="EC" id="1.2.1.8"/>
    </reaction>
</comment>
<comment type="cofactor">
    <cofactor evidence="1">
        <name>FAD</name>
        <dbReference type="ChEBI" id="CHEBI:57692"/>
    </cofactor>
</comment>
<comment type="pathway">
    <text evidence="1">Amine and polyamine biosynthesis; betaine biosynthesis via choline pathway; betaine aldehyde from choline (cytochrome c reductase route): step 1/1.</text>
</comment>
<comment type="similarity">
    <text evidence="1">Belongs to the GMC oxidoreductase family.</text>
</comment>
<protein>
    <recommendedName>
        <fullName evidence="1">Oxygen-dependent choline dehydrogenase</fullName>
        <shortName evidence="1">CDH</shortName>
        <shortName evidence="1">CHD</shortName>
        <ecNumber evidence="1">1.1.99.1</ecNumber>
    </recommendedName>
    <alternativeName>
        <fullName evidence="1">Betaine aldehyde dehydrogenase</fullName>
        <shortName evidence="1">BADH</shortName>
        <ecNumber evidence="1">1.2.1.8</ecNumber>
    </alternativeName>
</protein>
<reference key="1">
    <citation type="journal article" date="2002" name="Environ. Microbiol.">
        <title>Complete genome sequence and comparative analysis of the metabolically versatile Pseudomonas putida KT2440.</title>
        <authorList>
            <person name="Nelson K.E."/>
            <person name="Weinel C."/>
            <person name="Paulsen I.T."/>
            <person name="Dodson R.J."/>
            <person name="Hilbert H."/>
            <person name="Martins dos Santos V.A.P."/>
            <person name="Fouts D.E."/>
            <person name="Gill S.R."/>
            <person name="Pop M."/>
            <person name="Holmes M."/>
            <person name="Brinkac L.M."/>
            <person name="Beanan M.J."/>
            <person name="DeBoy R.T."/>
            <person name="Daugherty S.C."/>
            <person name="Kolonay J.F."/>
            <person name="Madupu R."/>
            <person name="Nelson W.C."/>
            <person name="White O."/>
            <person name="Peterson J.D."/>
            <person name="Khouri H.M."/>
            <person name="Hance I."/>
            <person name="Chris Lee P."/>
            <person name="Holtzapple E.K."/>
            <person name="Scanlan D."/>
            <person name="Tran K."/>
            <person name="Moazzez A."/>
            <person name="Utterback T.R."/>
            <person name="Rizzo M."/>
            <person name="Lee K."/>
            <person name="Kosack D."/>
            <person name="Moestl D."/>
            <person name="Wedler H."/>
            <person name="Lauber J."/>
            <person name="Stjepandic D."/>
            <person name="Hoheisel J."/>
            <person name="Straetz M."/>
            <person name="Heim S."/>
            <person name="Kiewitz C."/>
            <person name="Eisen J.A."/>
            <person name="Timmis K.N."/>
            <person name="Duesterhoeft A."/>
            <person name="Tuemmler B."/>
            <person name="Fraser C.M."/>
        </authorList>
    </citation>
    <scope>NUCLEOTIDE SEQUENCE [LARGE SCALE GENOMIC DNA]</scope>
    <source>
        <strain>ATCC 47054 / DSM 6125 / CFBP 8728 / NCIMB 11950 / KT2440</strain>
    </source>
</reference>
<organism>
    <name type="scientific">Pseudomonas putida (strain ATCC 47054 / DSM 6125 / CFBP 8728 / NCIMB 11950 / KT2440)</name>
    <dbReference type="NCBI Taxonomy" id="160488"/>
    <lineage>
        <taxon>Bacteria</taxon>
        <taxon>Pseudomonadati</taxon>
        <taxon>Pseudomonadota</taxon>
        <taxon>Gammaproteobacteria</taxon>
        <taxon>Pseudomonadales</taxon>
        <taxon>Pseudomonadaceae</taxon>
        <taxon>Pseudomonas</taxon>
    </lineage>
</organism>
<sequence length="565" mass="62545">MSQEFDYIIVGAGSAGNTLATRLTEDAGVTVLLLEAGGPDYRFDFRTQMPAALAFPLQGRRYNWAYETDPEPYMDGRRMECGRGKGLGGSSLINGMCYIRGNAMDFDGWAELPGLEDWTYLDCLPYFRKAETRDIGPNDYHGGEGPVSVTTPKAGNNPLFHAMVEAGVQAGYPRTEDLNGYQQEGFGPMDRTVTKNGRRSSTARGYLDQAKKRPNLTIVTHALTDRVLFDGKRAIGVTYLVGDSEERVEARARKEVIVSSGAIASPQLLQRSGVGPRALLESLDIPVVHDLPGVGENLQDHLELYLQYACTQPVSLYPSLLWWNQPAIGAEWMFNGTGIGASNQFEAGGFIRTRPEFKWPNIQYHFLPVAINYNGSNGVKEHGFQAHMGSMRSPARGRIQVKSKDPRQHPSILFNYMSTEQDWQEFRDGIRLTREIMAQPALDPYRGREISPGADVQTDEQLDKFIREHAETAFHPSCSCKMGTDDMAVVDGEGRVHGMKGLRVVDASIMPLIITGNLNATTIMIAEKISDKIRGRKPLPRSTAKYYVAGDAPVKGKPMREVKQG</sequence>